<accession>P27928</accession>
<keyword id="KW-0496">Mitochondrion</keyword>
<keyword id="KW-0687">Ribonucleoprotein</keyword>
<keyword id="KW-0689">Ribosomal protein</keyword>
<sequence length="559" mass="64234">MARKGNPISVRLDLNRSSDPSRFSDYYYGKSLYQDVNLRSYFSSIRPPTRLTFGFRLGRCIILHFPKRTFIHFFLPRRPLRLKRRDKSRPGKDKGRWWAFGKVGPIGCLHSSEGTEEERNEVRGRGAGKRVESIDREKQNEIRIWPKKMQRYGYHDRTPSRKKNFSKSLRVSGAFKHPKYAGVVNDIAFLIENDDSFIKTKLFKFFFLPKKSRSDGPTSHLLKRTLPAVRPSLNYSVMQYFFNTKNKMHFDPVVVLNHFVAPGVAEPSTMGGAKGGSLDKRIRSRIAFFVESSTSDKKCLARAKKRLIHFIRQANDLRFAGTTKTTISLFPFFGATFFFSRDGVGVYNNPFYEYAREQLLGQLRIKCRNLMGKDKVMELIEKFIDLGRIGKLIKGIEMMIEIILRKRRIPYGYNSYLNEVQKMRSFLSNRTNTNTLIESVKIKSVYQSASLIAQDISFQLRNNPISFRSIFSKIVKDIPLIMPKGVEGIRICCSGRLGGAEIARTECGKYGKTSCNVFNQKIDYAPAEVSTRDGISGVKVRISYSQNKKGRAISETYEI</sequence>
<geneLocation type="mitochondrion"/>
<name>RT03_MAIZE</name>
<feature type="chain" id="PRO_0000130313" description="Small ribosomal subunit protein uS3m">
    <location>
        <begin position="1"/>
        <end position="559"/>
    </location>
</feature>
<feature type="region of interest" description="Disordered" evidence="1">
    <location>
        <begin position="113"/>
        <end position="134"/>
    </location>
</feature>
<feature type="compositionally biased region" description="Basic and acidic residues" evidence="1">
    <location>
        <begin position="120"/>
        <end position="134"/>
    </location>
</feature>
<gene>
    <name type="primary">RPS3</name>
</gene>
<proteinExistence type="inferred from homology"/>
<comment type="subcellular location">
    <subcellularLocation>
        <location>Mitochondrion</location>
    </subcellularLocation>
</comment>
<comment type="similarity">
    <text evidence="2">Belongs to the universal ribosomal protein uS3 family.</text>
</comment>
<protein>
    <recommendedName>
        <fullName evidence="2">Small ribosomal subunit protein uS3m</fullName>
    </recommendedName>
    <alternativeName>
        <fullName>Ribosomal protein S3, mitochondrial</fullName>
    </alternativeName>
</protein>
<dbReference type="EMBL" id="X57445">
    <property type="protein sequence ID" value="CAA40690.1"/>
    <property type="molecule type" value="Genomic_DNA"/>
</dbReference>
<dbReference type="PIR" id="S15025">
    <property type="entry name" value="R3ZMS3"/>
</dbReference>
<dbReference type="SMR" id="P27928"/>
<dbReference type="PaxDb" id="4577-GRMZM5G861791_P01"/>
<dbReference type="MaizeGDB" id="69576"/>
<dbReference type="eggNOG" id="ENOG502QSWK">
    <property type="taxonomic scope" value="Eukaryota"/>
</dbReference>
<dbReference type="GO" id="GO:0005739">
    <property type="term" value="C:mitochondrion"/>
    <property type="evidence" value="ECO:0007669"/>
    <property type="project" value="UniProtKB-SubCell"/>
</dbReference>
<dbReference type="GO" id="GO:1990904">
    <property type="term" value="C:ribonucleoprotein complex"/>
    <property type="evidence" value="ECO:0007669"/>
    <property type="project" value="UniProtKB-KW"/>
</dbReference>
<dbReference type="GO" id="GO:0005840">
    <property type="term" value="C:ribosome"/>
    <property type="evidence" value="ECO:0007669"/>
    <property type="project" value="UniProtKB-KW"/>
</dbReference>
<dbReference type="GO" id="GO:0003723">
    <property type="term" value="F:RNA binding"/>
    <property type="evidence" value="ECO:0007669"/>
    <property type="project" value="InterPro"/>
</dbReference>
<dbReference type="GO" id="GO:0003735">
    <property type="term" value="F:structural constituent of ribosome"/>
    <property type="evidence" value="ECO:0007669"/>
    <property type="project" value="InterPro"/>
</dbReference>
<dbReference type="GO" id="GO:0006412">
    <property type="term" value="P:translation"/>
    <property type="evidence" value="ECO:0007669"/>
    <property type="project" value="InterPro"/>
</dbReference>
<dbReference type="FunFam" id="3.30.1140.32:FF:000008">
    <property type="entry name" value="Ribosomal protein S3"/>
    <property type="match status" value="1"/>
</dbReference>
<dbReference type="Gene3D" id="3.30.1140.32">
    <property type="entry name" value="Ribosomal protein S3, C-terminal domain"/>
    <property type="match status" value="1"/>
</dbReference>
<dbReference type="InterPro" id="IPR009019">
    <property type="entry name" value="KH_sf_prok-type"/>
</dbReference>
<dbReference type="InterPro" id="IPR036419">
    <property type="entry name" value="Ribosomal_S3_C_sf"/>
</dbReference>
<dbReference type="InterPro" id="IPR001351">
    <property type="entry name" value="Ribosomal_uS3_C"/>
</dbReference>
<dbReference type="InterPro" id="IPR018280">
    <property type="entry name" value="Ribosomal_uS3_CS"/>
</dbReference>
<dbReference type="InterPro" id="IPR044954">
    <property type="entry name" value="Ribosomal_uS3m_plant"/>
</dbReference>
<dbReference type="PANTHER" id="PTHR35928">
    <property type="entry name" value="RIBOSOMAL PROTEIN S3, MITOCHONDRIAL"/>
    <property type="match status" value="1"/>
</dbReference>
<dbReference type="PANTHER" id="PTHR35928:SF2">
    <property type="entry name" value="SMALL RIBOSOMAL SUBUNIT PROTEIN US3M"/>
    <property type="match status" value="1"/>
</dbReference>
<dbReference type="Pfam" id="PF00189">
    <property type="entry name" value="Ribosomal_S3_C"/>
    <property type="match status" value="1"/>
</dbReference>
<dbReference type="SUPFAM" id="SSF54814">
    <property type="entry name" value="Prokaryotic type KH domain (KH-domain type II)"/>
    <property type="match status" value="1"/>
</dbReference>
<dbReference type="SUPFAM" id="SSF54821">
    <property type="entry name" value="Ribosomal protein S3 C-terminal domain"/>
    <property type="match status" value="1"/>
</dbReference>
<dbReference type="PROSITE" id="PS00548">
    <property type="entry name" value="RIBOSOMAL_S3"/>
    <property type="match status" value="1"/>
</dbReference>
<reference key="1">
    <citation type="journal article" date="1991" name="EMBO J.">
        <title>The NCS3 mutation: genetic evidence for the expression of ribosomal protein genes in Zea mays mitochondria.</title>
        <authorList>
            <person name="Hunt M.D."/>
            <person name="Newton K.J."/>
        </authorList>
    </citation>
    <scope>NUCLEOTIDE SEQUENCE [GENOMIC DNA]</scope>
</reference>
<evidence type="ECO:0000256" key="1">
    <source>
        <dbReference type="SAM" id="MobiDB-lite"/>
    </source>
</evidence>
<evidence type="ECO:0000305" key="2"/>
<organism>
    <name type="scientific">Zea mays</name>
    <name type="common">Maize</name>
    <dbReference type="NCBI Taxonomy" id="4577"/>
    <lineage>
        <taxon>Eukaryota</taxon>
        <taxon>Viridiplantae</taxon>
        <taxon>Streptophyta</taxon>
        <taxon>Embryophyta</taxon>
        <taxon>Tracheophyta</taxon>
        <taxon>Spermatophyta</taxon>
        <taxon>Magnoliopsida</taxon>
        <taxon>Liliopsida</taxon>
        <taxon>Poales</taxon>
        <taxon>Poaceae</taxon>
        <taxon>PACMAD clade</taxon>
        <taxon>Panicoideae</taxon>
        <taxon>Andropogonodae</taxon>
        <taxon>Andropogoneae</taxon>
        <taxon>Tripsacinae</taxon>
        <taxon>Zea</taxon>
    </lineage>
</organism>